<comment type="function">
    <text evidence="1">Involved in the biogenesis of the 60S ribosomal subunit. Acts as TP53 repressor, preventing TP53 stabilization and cell cycle arrest.</text>
</comment>
<comment type="subunit">
    <text evidence="1">Associates with pre-60S ribosomal particles. Interacts with MINAS-60 (product of an alternative open reading frame of RBM10).</text>
</comment>
<comment type="subcellular location">
    <subcellularLocation>
        <location evidence="1">Nucleus</location>
        <location evidence="1">Nucleolus</location>
    </subcellularLocation>
</comment>
<comment type="tissue specificity">
    <text evidence="4">Ubiquitous.</text>
</comment>
<comment type="similarity">
    <text evidence="2">Belongs to the TRAFAC class OBG-HflX-like GTPase superfamily. OBG GTPase family. NOG subfamily.</text>
</comment>
<accession>Q99ME9</accession>
<accession>Q99K16</accession>
<accession>Q99P78</accession>
<accession>Q9CT02</accession>
<keyword id="KW-0007">Acetylation</keyword>
<keyword id="KW-0342">GTP-binding</keyword>
<keyword id="KW-1017">Isopeptide bond</keyword>
<keyword id="KW-0547">Nucleotide-binding</keyword>
<keyword id="KW-0539">Nucleus</keyword>
<keyword id="KW-0597">Phosphoprotein</keyword>
<keyword id="KW-1185">Reference proteome</keyword>
<keyword id="KW-0690">Ribosome biogenesis</keyword>
<keyword id="KW-0832">Ubl conjugation</keyword>
<reference key="1">
    <citation type="submission" date="2001-02" db="EMBL/GenBank/DDBJ databases">
        <title>Cloning and characterization of a mouse GTP-binding protein, NGB.</title>
        <authorList>
            <person name="Cheng J.Q."/>
        </authorList>
    </citation>
    <scope>NUCLEOTIDE SEQUENCE [MRNA]</scope>
</reference>
<reference key="2">
    <citation type="journal article" date="2001" name="J. Am. Soc. Nephrol.">
        <title>Identification of a novel nuclear guanosine triphosphate-binding protein differentially expressed in renal disease.</title>
        <authorList>
            <person name="Laping N.J."/>
            <person name="Olson B.A."/>
            <person name="Zhu Y."/>
        </authorList>
    </citation>
    <scope>NUCLEOTIDE SEQUENCE [MRNA]</scope>
    <scope>TISSUE SPECIFICITY</scope>
    <source>
        <strain>BALB/cJ</strain>
    </source>
</reference>
<reference key="3">
    <citation type="journal article" date="2004" name="Genome Res.">
        <title>The status, quality, and expansion of the NIH full-length cDNA project: the Mammalian Gene Collection (MGC).</title>
        <authorList>
            <consortium name="The MGC Project Team"/>
        </authorList>
    </citation>
    <scope>NUCLEOTIDE SEQUENCE [LARGE SCALE MRNA]</scope>
    <source>
        <strain>FVB/N-3</strain>
        <tissue>Mammary gland</tissue>
    </source>
</reference>
<reference key="4">
    <citation type="journal article" date="2005" name="Science">
        <title>The transcriptional landscape of the mammalian genome.</title>
        <authorList>
            <person name="Carninci P."/>
            <person name="Kasukawa T."/>
            <person name="Katayama S."/>
            <person name="Gough J."/>
            <person name="Frith M.C."/>
            <person name="Maeda N."/>
            <person name="Oyama R."/>
            <person name="Ravasi T."/>
            <person name="Lenhard B."/>
            <person name="Wells C."/>
            <person name="Kodzius R."/>
            <person name="Shimokawa K."/>
            <person name="Bajic V.B."/>
            <person name="Brenner S.E."/>
            <person name="Batalov S."/>
            <person name="Forrest A.R."/>
            <person name="Zavolan M."/>
            <person name="Davis M.J."/>
            <person name="Wilming L.G."/>
            <person name="Aidinis V."/>
            <person name="Allen J.E."/>
            <person name="Ambesi-Impiombato A."/>
            <person name="Apweiler R."/>
            <person name="Aturaliya R.N."/>
            <person name="Bailey T.L."/>
            <person name="Bansal M."/>
            <person name="Baxter L."/>
            <person name="Beisel K.W."/>
            <person name="Bersano T."/>
            <person name="Bono H."/>
            <person name="Chalk A.M."/>
            <person name="Chiu K.P."/>
            <person name="Choudhary V."/>
            <person name="Christoffels A."/>
            <person name="Clutterbuck D.R."/>
            <person name="Crowe M.L."/>
            <person name="Dalla E."/>
            <person name="Dalrymple B.P."/>
            <person name="de Bono B."/>
            <person name="Della Gatta G."/>
            <person name="di Bernardo D."/>
            <person name="Down T."/>
            <person name="Engstrom P."/>
            <person name="Fagiolini M."/>
            <person name="Faulkner G."/>
            <person name="Fletcher C.F."/>
            <person name="Fukushima T."/>
            <person name="Furuno M."/>
            <person name="Futaki S."/>
            <person name="Gariboldi M."/>
            <person name="Georgii-Hemming P."/>
            <person name="Gingeras T.R."/>
            <person name="Gojobori T."/>
            <person name="Green R.E."/>
            <person name="Gustincich S."/>
            <person name="Harbers M."/>
            <person name="Hayashi Y."/>
            <person name="Hensch T.K."/>
            <person name="Hirokawa N."/>
            <person name="Hill D."/>
            <person name="Huminiecki L."/>
            <person name="Iacono M."/>
            <person name="Ikeo K."/>
            <person name="Iwama A."/>
            <person name="Ishikawa T."/>
            <person name="Jakt M."/>
            <person name="Kanapin A."/>
            <person name="Katoh M."/>
            <person name="Kawasawa Y."/>
            <person name="Kelso J."/>
            <person name="Kitamura H."/>
            <person name="Kitano H."/>
            <person name="Kollias G."/>
            <person name="Krishnan S.P."/>
            <person name="Kruger A."/>
            <person name="Kummerfeld S.K."/>
            <person name="Kurochkin I.V."/>
            <person name="Lareau L.F."/>
            <person name="Lazarevic D."/>
            <person name="Lipovich L."/>
            <person name="Liu J."/>
            <person name="Liuni S."/>
            <person name="McWilliam S."/>
            <person name="Madan Babu M."/>
            <person name="Madera M."/>
            <person name="Marchionni L."/>
            <person name="Matsuda H."/>
            <person name="Matsuzawa S."/>
            <person name="Miki H."/>
            <person name="Mignone F."/>
            <person name="Miyake S."/>
            <person name="Morris K."/>
            <person name="Mottagui-Tabar S."/>
            <person name="Mulder N."/>
            <person name="Nakano N."/>
            <person name="Nakauchi H."/>
            <person name="Ng P."/>
            <person name="Nilsson R."/>
            <person name="Nishiguchi S."/>
            <person name="Nishikawa S."/>
            <person name="Nori F."/>
            <person name="Ohara O."/>
            <person name="Okazaki Y."/>
            <person name="Orlando V."/>
            <person name="Pang K.C."/>
            <person name="Pavan W.J."/>
            <person name="Pavesi G."/>
            <person name="Pesole G."/>
            <person name="Petrovsky N."/>
            <person name="Piazza S."/>
            <person name="Reed J."/>
            <person name="Reid J.F."/>
            <person name="Ring B.Z."/>
            <person name="Ringwald M."/>
            <person name="Rost B."/>
            <person name="Ruan Y."/>
            <person name="Salzberg S.L."/>
            <person name="Sandelin A."/>
            <person name="Schneider C."/>
            <person name="Schoenbach C."/>
            <person name="Sekiguchi K."/>
            <person name="Semple C.A."/>
            <person name="Seno S."/>
            <person name="Sessa L."/>
            <person name="Sheng Y."/>
            <person name="Shibata Y."/>
            <person name="Shimada H."/>
            <person name="Shimada K."/>
            <person name="Silva D."/>
            <person name="Sinclair B."/>
            <person name="Sperling S."/>
            <person name="Stupka E."/>
            <person name="Sugiura K."/>
            <person name="Sultana R."/>
            <person name="Takenaka Y."/>
            <person name="Taki K."/>
            <person name="Tammoja K."/>
            <person name="Tan S.L."/>
            <person name="Tang S."/>
            <person name="Taylor M.S."/>
            <person name="Tegner J."/>
            <person name="Teichmann S.A."/>
            <person name="Ueda H.R."/>
            <person name="van Nimwegen E."/>
            <person name="Verardo R."/>
            <person name="Wei C.L."/>
            <person name="Yagi K."/>
            <person name="Yamanishi H."/>
            <person name="Zabarovsky E."/>
            <person name="Zhu S."/>
            <person name="Zimmer A."/>
            <person name="Hide W."/>
            <person name="Bult C."/>
            <person name="Grimmond S.M."/>
            <person name="Teasdale R.D."/>
            <person name="Liu E.T."/>
            <person name="Brusic V."/>
            <person name="Quackenbush J."/>
            <person name="Wahlestedt C."/>
            <person name="Mattick J.S."/>
            <person name="Hume D.A."/>
            <person name="Kai C."/>
            <person name="Sasaki D."/>
            <person name="Tomaru Y."/>
            <person name="Fukuda S."/>
            <person name="Kanamori-Katayama M."/>
            <person name="Suzuki M."/>
            <person name="Aoki J."/>
            <person name="Arakawa T."/>
            <person name="Iida J."/>
            <person name="Imamura K."/>
            <person name="Itoh M."/>
            <person name="Kato T."/>
            <person name="Kawaji H."/>
            <person name="Kawagashira N."/>
            <person name="Kawashima T."/>
            <person name="Kojima M."/>
            <person name="Kondo S."/>
            <person name="Konno H."/>
            <person name="Nakano K."/>
            <person name="Ninomiya N."/>
            <person name="Nishio T."/>
            <person name="Okada M."/>
            <person name="Plessy C."/>
            <person name="Shibata K."/>
            <person name="Shiraki T."/>
            <person name="Suzuki S."/>
            <person name="Tagami M."/>
            <person name="Waki K."/>
            <person name="Watahiki A."/>
            <person name="Okamura-Oho Y."/>
            <person name="Suzuki H."/>
            <person name="Kawai J."/>
            <person name="Hayashizaki Y."/>
        </authorList>
    </citation>
    <scope>NUCLEOTIDE SEQUENCE [LARGE SCALE MRNA] OF 1-347</scope>
    <source>
        <strain>C57BL/6J</strain>
        <tissue>Embryo</tissue>
    </source>
</reference>
<reference key="5">
    <citation type="journal article" date="2010" name="Cell">
        <title>A tissue-specific atlas of mouse protein phosphorylation and expression.</title>
        <authorList>
            <person name="Huttlin E.L."/>
            <person name="Jedrychowski M.P."/>
            <person name="Elias J.E."/>
            <person name="Goswami T."/>
            <person name="Rad R."/>
            <person name="Beausoleil S.A."/>
            <person name="Villen J."/>
            <person name="Haas W."/>
            <person name="Sowa M.E."/>
            <person name="Gygi S.P."/>
        </authorList>
    </citation>
    <scope>PHOSPHORYLATION [LARGE SCALE ANALYSIS] AT SER-468; SER-470 AND SER-472</scope>
    <scope>IDENTIFICATION BY MASS SPECTROMETRY [LARGE SCALE ANALYSIS]</scope>
    <source>
        <tissue>Liver</tissue>
        <tissue>Pancreas</tissue>
        <tissue>Spleen</tissue>
        <tissue>Testis</tissue>
    </source>
</reference>
<sequence length="634" mass="74113">MAHYNFKKITVVPSAKDFIDLTLSKTQRKTPTVIHKHYQIHRIRHFYMRKVKFTQQNYHDRLSQILSDFPKLDDIHPFYADLMNILYDKDHYKLALGQINIAKNLVDNVAKDYVRLMKYGDSLYRCKQLKRAALGRMCTIIKRQRQSLEYLEQVRQHLSRLPTIDPNTRTLLLCGYPNVGKSSFINKVTRADVDVQPYAFTTKSLFVGHMDYKYLRWQVVDTPGILDHPLEDRNTIEMQAITALAHLRAAVLYVMDLSEQCGHGLKEQLELFQNIRPLFINKPLIVVANKCDVKRIAELSEEDQKIFLDLQAEGFPVIETSTLTEEGVIQVKTEACDRLLAHRVETKMKGNKVNEVLNRLHLAVPNKRDDKERPPFIPEGVIARRKRMEIEEPKKKRERDLELEMGDDYILDLQKYWDLMNSSEKYDKIPEIWEGHNVADYIDPAIMKKLEELEKEEELRTAAGEYDSDSESEDEEMMEIRQLAKQIREKKKLKILQSKEKNKQGPRMPRTAKKVQRADLENEMRSLGVDMDDKNNAHYAVQARRSRSVTRKRKREESVPPSSTARSRSCSRTPRDVSGLRDVKMVKKAKTMMKKAQKKMNRLGKKGEADRHVFDMKPKHLLSGKRKAGKKDRR</sequence>
<dbReference type="EMBL" id="AF348208">
    <property type="protein sequence ID" value="AAK19749.1"/>
    <property type="molecule type" value="mRNA"/>
</dbReference>
<dbReference type="EMBL" id="AF325354">
    <property type="protein sequence ID" value="AAK13445.1"/>
    <property type="molecule type" value="mRNA"/>
</dbReference>
<dbReference type="EMBL" id="BC005514">
    <property type="protein sequence ID" value="AAH05514.1"/>
    <property type="molecule type" value="mRNA"/>
</dbReference>
<dbReference type="EMBL" id="BC025431">
    <property type="protein sequence ID" value="AAH25431.1"/>
    <property type="molecule type" value="mRNA"/>
</dbReference>
<dbReference type="EMBL" id="AK011580">
    <property type="protein sequence ID" value="BAB27714.1"/>
    <property type="molecule type" value="mRNA"/>
</dbReference>
<dbReference type="CCDS" id="CCDS26236.1"/>
<dbReference type="RefSeq" id="NP_081276.2">
    <property type="nucleotide sequence ID" value="NM_027000.4"/>
</dbReference>
<dbReference type="SMR" id="Q99ME9"/>
<dbReference type="BioGRID" id="213310">
    <property type="interactions" value="45"/>
</dbReference>
<dbReference type="CORUM" id="Q99ME9"/>
<dbReference type="FunCoup" id="Q99ME9">
    <property type="interactions" value="4823"/>
</dbReference>
<dbReference type="IntAct" id="Q99ME9">
    <property type="interactions" value="5"/>
</dbReference>
<dbReference type="MINT" id="Q99ME9"/>
<dbReference type="STRING" id="10090.ENSMUSP00000152412"/>
<dbReference type="iPTMnet" id="Q99ME9"/>
<dbReference type="PhosphoSitePlus" id="Q99ME9"/>
<dbReference type="SwissPalm" id="Q99ME9"/>
<dbReference type="PaxDb" id="10090-ENSMUSP00000021574"/>
<dbReference type="PeptideAtlas" id="Q99ME9"/>
<dbReference type="ProteomicsDB" id="252983"/>
<dbReference type="Pumba" id="Q99ME9"/>
<dbReference type="Antibodypedia" id="23768">
    <property type="antibodies" value="184 antibodies from 33 providers"/>
</dbReference>
<dbReference type="Ensembl" id="ENSMUST00000222098.2">
    <property type="protein sequence ID" value="ENSMUSP00000152412.2"/>
    <property type="gene ID" value="ENSMUSG00000021149.9"/>
</dbReference>
<dbReference type="GeneID" id="69237"/>
<dbReference type="KEGG" id="mmu:69237"/>
<dbReference type="UCSC" id="uc007pkp.1">
    <property type="organism name" value="mouse"/>
</dbReference>
<dbReference type="AGR" id="MGI:1916487"/>
<dbReference type="CTD" id="23560"/>
<dbReference type="MGI" id="MGI:1916487">
    <property type="gene designation" value="Gtpbp4"/>
</dbReference>
<dbReference type="VEuPathDB" id="HostDB:ENSMUSG00000021149"/>
<dbReference type="eggNOG" id="KOG1490">
    <property type="taxonomic scope" value="Eukaryota"/>
</dbReference>
<dbReference type="GeneTree" id="ENSGT00390000018475"/>
<dbReference type="HOGENOM" id="CLU_011784_4_1_1"/>
<dbReference type="InParanoid" id="Q99ME9"/>
<dbReference type="OMA" id="EWKNDVM"/>
<dbReference type="OrthoDB" id="415015at2759"/>
<dbReference type="PhylomeDB" id="Q99ME9"/>
<dbReference type="TreeFam" id="TF300430"/>
<dbReference type="BioGRID-ORCS" id="69237">
    <property type="hits" value="28 hits in 80 CRISPR screens"/>
</dbReference>
<dbReference type="ChiTaRS" id="Gtpbp4">
    <property type="organism name" value="mouse"/>
</dbReference>
<dbReference type="PRO" id="PR:Q99ME9"/>
<dbReference type="Proteomes" id="UP000000589">
    <property type="component" value="Chromosome 13"/>
</dbReference>
<dbReference type="RNAct" id="Q99ME9">
    <property type="molecule type" value="protein"/>
</dbReference>
<dbReference type="Bgee" id="ENSMUSG00000021149">
    <property type="expression patterns" value="Expressed in otic placode and 267 other cell types or tissues"/>
</dbReference>
<dbReference type="ExpressionAtlas" id="Q99ME9">
    <property type="expression patterns" value="baseline and differential"/>
</dbReference>
<dbReference type="GO" id="GO:0005737">
    <property type="term" value="C:cytoplasm"/>
    <property type="evidence" value="ECO:0000250"/>
    <property type="project" value="HGNC-UCL"/>
</dbReference>
<dbReference type="GO" id="GO:0005829">
    <property type="term" value="C:cytosol"/>
    <property type="evidence" value="ECO:0007669"/>
    <property type="project" value="Ensembl"/>
</dbReference>
<dbReference type="GO" id="GO:0031965">
    <property type="term" value="C:nuclear membrane"/>
    <property type="evidence" value="ECO:0007669"/>
    <property type="project" value="Ensembl"/>
</dbReference>
<dbReference type="GO" id="GO:0005730">
    <property type="term" value="C:nucleolus"/>
    <property type="evidence" value="ECO:0007669"/>
    <property type="project" value="UniProtKB-SubCell"/>
</dbReference>
<dbReference type="GO" id="GO:0005654">
    <property type="term" value="C:nucleoplasm"/>
    <property type="evidence" value="ECO:0007669"/>
    <property type="project" value="Ensembl"/>
</dbReference>
<dbReference type="GO" id="GO:0005634">
    <property type="term" value="C:nucleus"/>
    <property type="evidence" value="ECO:0000250"/>
    <property type="project" value="HGNC-UCL"/>
</dbReference>
<dbReference type="GO" id="GO:0048471">
    <property type="term" value="C:perinuclear region of cytoplasm"/>
    <property type="evidence" value="ECO:0000250"/>
    <property type="project" value="HGNC-UCL"/>
</dbReference>
<dbReference type="GO" id="GO:0005525">
    <property type="term" value="F:GTP binding"/>
    <property type="evidence" value="ECO:0000250"/>
    <property type="project" value="HGNC-UCL"/>
</dbReference>
<dbReference type="GO" id="GO:0003924">
    <property type="term" value="F:GTPase activity"/>
    <property type="evidence" value="ECO:0000250"/>
    <property type="project" value="HGNC-UCL"/>
</dbReference>
<dbReference type="GO" id="GO:1990275">
    <property type="term" value="F:preribosome binding"/>
    <property type="evidence" value="ECO:0000250"/>
    <property type="project" value="UniProtKB"/>
</dbReference>
<dbReference type="GO" id="GO:0000463">
    <property type="term" value="P:maturation of LSU-rRNA from tricistronic rRNA transcript (SSU-rRNA, 5.8S rRNA, LSU-rRNA)"/>
    <property type="evidence" value="ECO:0000315"/>
    <property type="project" value="MGI"/>
</dbReference>
<dbReference type="GO" id="GO:0030336">
    <property type="term" value="P:negative regulation of cell migration"/>
    <property type="evidence" value="ECO:0000250"/>
    <property type="project" value="HGNC-UCL"/>
</dbReference>
<dbReference type="GO" id="GO:0008285">
    <property type="term" value="P:negative regulation of cell population proliferation"/>
    <property type="evidence" value="ECO:0000250"/>
    <property type="project" value="HGNC-UCL"/>
</dbReference>
<dbReference type="GO" id="GO:0022408">
    <property type="term" value="P:negative regulation of cell-cell adhesion"/>
    <property type="evidence" value="ECO:0000250"/>
    <property type="project" value="HGNC-UCL"/>
</dbReference>
<dbReference type="GO" id="GO:0008156">
    <property type="term" value="P:negative regulation of DNA replication"/>
    <property type="evidence" value="ECO:0000250"/>
    <property type="project" value="HGNC-UCL"/>
</dbReference>
<dbReference type="GO" id="GO:0010972">
    <property type="term" value="P:negative regulation of G2/M transition of mitotic cell cycle"/>
    <property type="evidence" value="ECO:0000250"/>
    <property type="project" value="HGNC-UCL"/>
</dbReference>
<dbReference type="GO" id="GO:0031397">
    <property type="term" value="P:negative regulation of protein ubiquitination"/>
    <property type="evidence" value="ECO:0000250"/>
    <property type="project" value="HGNC-UCL"/>
</dbReference>
<dbReference type="GO" id="GO:0050821">
    <property type="term" value="P:protein stabilization"/>
    <property type="evidence" value="ECO:0000250"/>
    <property type="project" value="HGNC-UCL"/>
</dbReference>
<dbReference type="GO" id="GO:0042273">
    <property type="term" value="P:ribosomal large subunit biogenesis"/>
    <property type="evidence" value="ECO:0000250"/>
    <property type="project" value="UniProtKB"/>
</dbReference>
<dbReference type="CDD" id="cd01897">
    <property type="entry name" value="NOG"/>
    <property type="match status" value="1"/>
</dbReference>
<dbReference type="FunFam" id="1.20.120.1190:FF:000001">
    <property type="entry name" value="Nucleolar GTP-binding protein 1"/>
    <property type="match status" value="1"/>
</dbReference>
<dbReference type="FunFam" id="3.40.50.300:FF:000496">
    <property type="entry name" value="Nucleolar GTP-binding protein 1"/>
    <property type="match status" value="1"/>
</dbReference>
<dbReference type="Gene3D" id="1.20.120.1190">
    <property type="match status" value="1"/>
</dbReference>
<dbReference type="Gene3D" id="3.40.50.300">
    <property type="entry name" value="P-loop containing nucleotide triphosphate hydrolases"/>
    <property type="match status" value="1"/>
</dbReference>
<dbReference type="InterPro" id="IPR031167">
    <property type="entry name" value="G_OBG"/>
</dbReference>
<dbReference type="InterPro" id="IPR006073">
    <property type="entry name" value="GTP-bd"/>
</dbReference>
<dbReference type="InterPro" id="IPR024926">
    <property type="entry name" value="NOG1"/>
</dbReference>
<dbReference type="InterPro" id="IPR041623">
    <property type="entry name" value="NOG1_N"/>
</dbReference>
<dbReference type="InterPro" id="IPR010674">
    <property type="entry name" value="NOG1_Rossman_fold_dom"/>
</dbReference>
<dbReference type="InterPro" id="IPR012973">
    <property type="entry name" value="NOG_C"/>
</dbReference>
<dbReference type="InterPro" id="IPR027417">
    <property type="entry name" value="P-loop_NTPase"/>
</dbReference>
<dbReference type="InterPro" id="IPR005225">
    <property type="entry name" value="Small_GTP-bd"/>
</dbReference>
<dbReference type="NCBIfam" id="TIGR00231">
    <property type="entry name" value="small_GTP"/>
    <property type="match status" value="1"/>
</dbReference>
<dbReference type="PANTHER" id="PTHR45759">
    <property type="entry name" value="NUCLEOLAR GTP-BINDING PROTEIN 1"/>
    <property type="match status" value="1"/>
</dbReference>
<dbReference type="Pfam" id="PF06858">
    <property type="entry name" value="NOG1"/>
    <property type="match status" value="1"/>
</dbReference>
<dbReference type="Pfam" id="PF17835">
    <property type="entry name" value="NOG1_N"/>
    <property type="match status" value="1"/>
</dbReference>
<dbReference type="Pfam" id="PF08155">
    <property type="entry name" value="NOGCT"/>
    <property type="match status" value="1"/>
</dbReference>
<dbReference type="PIRSF" id="PIRSF038919">
    <property type="entry name" value="NOG1"/>
    <property type="match status" value="1"/>
</dbReference>
<dbReference type="PRINTS" id="PR00326">
    <property type="entry name" value="GTP1OBG"/>
</dbReference>
<dbReference type="SUPFAM" id="SSF52540">
    <property type="entry name" value="P-loop containing nucleoside triphosphate hydrolases"/>
    <property type="match status" value="1"/>
</dbReference>
<dbReference type="PROSITE" id="PS51710">
    <property type="entry name" value="G_OBG"/>
    <property type="match status" value="1"/>
</dbReference>
<name>GTPB4_MOUSE</name>
<organism>
    <name type="scientific">Mus musculus</name>
    <name type="common">Mouse</name>
    <dbReference type="NCBI Taxonomy" id="10090"/>
    <lineage>
        <taxon>Eukaryota</taxon>
        <taxon>Metazoa</taxon>
        <taxon>Chordata</taxon>
        <taxon>Craniata</taxon>
        <taxon>Vertebrata</taxon>
        <taxon>Euteleostomi</taxon>
        <taxon>Mammalia</taxon>
        <taxon>Eutheria</taxon>
        <taxon>Euarchontoglires</taxon>
        <taxon>Glires</taxon>
        <taxon>Rodentia</taxon>
        <taxon>Myomorpha</taxon>
        <taxon>Muroidea</taxon>
        <taxon>Muridae</taxon>
        <taxon>Murinae</taxon>
        <taxon>Mus</taxon>
        <taxon>Mus</taxon>
    </lineage>
</organism>
<feature type="initiator methionine" description="Removed" evidence="1">
    <location>
        <position position="1"/>
    </location>
</feature>
<feature type="chain" id="PRO_0000195024" description="GTP-binding protein 4">
    <location>
        <begin position="2"/>
        <end position="634"/>
    </location>
</feature>
<feature type="domain" description="OBG-type G" evidence="2">
    <location>
        <begin position="169"/>
        <end position="340"/>
    </location>
</feature>
<feature type="region of interest" description="Disordered" evidence="3">
    <location>
        <begin position="494"/>
        <end position="634"/>
    </location>
</feature>
<feature type="compositionally biased region" description="Basic residues" evidence="3">
    <location>
        <begin position="544"/>
        <end position="554"/>
    </location>
</feature>
<feature type="compositionally biased region" description="Low complexity" evidence="3">
    <location>
        <begin position="560"/>
        <end position="572"/>
    </location>
</feature>
<feature type="compositionally biased region" description="Basic and acidic residues" evidence="3">
    <location>
        <begin position="573"/>
        <end position="585"/>
    </location>
</feature>
<feature type="compositionally biased region" description="Basic residues" evidence="3">
    <location>
        <begin position="586"/>
        <end position="604"/>
    </location>
</feature>
<feature type="compositionally biased region" description="Basic and acidic residues" evidence="3">
    <location>
        <begin position="605"/>
        <end position="618"/>
    </location>
</feature>
<feature type="compositionally biased region" description="Basic residues" evidence="3">
    <location>
        <begin position="619"/>
        <end position="634"/>
    </location>
</feature>
<feature type="binding site" evidence="2">
    <location>
        <begin position="175"/>
        <end position="182"/>
    </location>
    <ligand>
        <name>GTP</name>
        <dbReference type="ChEBI" id="CHEBI:37565"/>
    </ligand>
</feature>
<feature type="binding site" evidence="2">
    <location>
        <begin position="221"/>
        <end position="225"/>
    </location>
    <ligand>
        <name>GTP</name>
        <dbReference type="ChEBI" id="CHEBI:37565"/>
    </ligand>
</feature>
<feature type="binding site" evidence="2">
    <location>
        <begin position="289"/>
        <end position="292"/>
    </location>
    <ligand>
        <name>GTP</name>
        <dbReference type="ChEBI" id="CHEBI:37565"/>
    </ligand>
</feature>
<feature type="modified residue" description="N-acetylalanine" evidence="1">
    <location>
        <position position="2"/>
    </location>
</feature>
<feature type="modified residue" description="N6-acetyllysine; alternate" evidence="1">
    <location>
        <position position="103"/>
    </location>
</feature>
<feature type="modified residue" description="Phosphoserine" evidence="1">
    <location>
        <position position="122"/>
    </location>
</feature>
<feature type="modified residue" description="Phosphoserine" evidence="6">
    <location>
        <position position="468"/>
    </location>
</feature>
<feature type="modified residue" description="Phosphoserine" evidence="6">
    <location>
        <position position="470"/>
    </location>
</feature>
<feature type="modified residue" description="Phosphoserine" evidence="6">
    <location>
        <position position="472"/>
    </location>
</feature>
<feature type="modified residue" description="Phosphoserine" evidence="1">
    <location>
        <position position="558"/>
    </location>
</feature>
<feature type="cross-link" description="Glycyl lysine isopeptide (Lys-Gly) (interchain with G-Cter in SUMO2); alternate" evidence="1">
    <location>
        <position position="103"/>
    </location>
</feature>
<feature type="cross-link" description="Glycyl lysine isopeptide (Lys-Gly) (interchain with G-Cter in SUMO2)" evidence="1">
    <location>
        <position position="332"/>
    </location>
</feature>
<feature type="cross-link" description="Glycyl lysine isopeptide (Lys-Gly) (interchain with G-Cter in SUMO2)" evidence="1">
    <location>
        <position position="534"/>
    </location>
</feature>
<feature type="sequence conflict" description="In Ref. 3; AAH05514." evidence="5" ref="3">
    <original>D</original>
    <variation>E</variation>
    <location>
        <position position="17"/>
    </location>
</feature>
<feature type="sequence conflict" description="In Ref. 2; AAK13445." evidence="5" ref="2">
    <original>DT</original>
    <variation>TY</variation>
    <location>
        <begin position="221"/>
        <end position="222"/>
    </location>
</feature>
<feature type="sequence conflict" description="In Ref. 2; AAK13445." evidence="5" ref="2">
    <original>E</original>
    <variation>K</variation>
    <location>
        <position position="270"/>
    </location>
</feature>
<feature type="sequence conflict" description="In Ref. 2; AAK13445." evidence="5" ref="2">
    <original>A</original>
    <variation>T</variation>
    <location>
        <position position="288"/>
    </location>
</feature>
<feature type="sequence conflict" description="In Ref. 2; AAK13445." evidence="5" ref="2">
    <original>V</original>
    <variation>A</variation>
    <location>
        <position position="293"/>
    </location>
</feature>
<feature type="sequence conflict" description="In Ref. 2; AAK13445." evidence="5" ref="2">
    <original>E</original>
    <variation>K</variation>
    <location>
        <position position="302"/>
    </location>
</feature>
<feature type="sequence conflict" description="In Ref. 2; AAK13445." evidence="5" ref="2">
    <original>AHR</original>
    <variation>THG</variation>
    <location>
        <begin position="341"/>
        <end position="343"/>
    </location>
</feature>
<feature type="sequence conflict" description="In Ref. 2; AAK13445." evidence="5" ref="2">
    <original>D</original>
    <variation>E</variation>
    <location>
        <position position="632"/>
    </location>
</feature>
<proteinExistence type="evidence at protein level"/>
<evidence type="ECO:0000250" key="1">
    <source>
        <dbReference type="UniProtKB" id="Q9BZE4"/>
    </source>
</evidence>
<evidence type="ECO:0000255" key="2">
    <source>
        <dbReference type="PROSITE-ProRule" id="PRU01047"/>
    </source>
</evidence>
<evidence type="ECO:0000256" key="3">
    <source>
        <dbReference type="SAM" id="MobiDB-lite"/>
    </source>
</evidence>
<evidence type="ECO:0000269" key="4">
    <source>
    </source>
</evidence>
<evidence type="ECO:0000305" key="5"/>
<evidence type="ECO:0007744" key="6">
    <source>
    </source>
</evidence>
<gene>
    <name type="primary">Gtpbp4</name>
    <name type="synonym">Crfg</name>
    <name type="synonym">Nog1</name>
</gene>
<protein>
    <recommendedName>
        <fullName>GTP-binding protein 4</fullName>
    </recommendedName>
    <alternativeName>
        <fullName>Chronic renal failure gene protein</fullName>
    </alternativeName>
    <alternativeName>
        <fullName>GTP-binding protein NGB</fullName>
    </alternativeName>
    <alternativeName>
        <fullName>Nucleolar GTP-binding protein 1</fullName>
    </alternativeName>
</protein>